<accession>A9MUI2</accession>
<proteinExistence type="inferred from homology"/>
<name>YBEY_SALPB</name>
<comment type="function">
    <text evidence="1">Single strand-specific metallo-endoribonuclease involved in late-stage 70S ribosome quality control and in maturation of the 3' terminus of the 16S rRNA.</text>
</comment>
<comment type="cofactor">
    <cofactor evidence="1">
        <name>Zn(2+)</name>
        <dbReference type="ChEBI" id="CHEBI:29105"/>
    </cofactor>
    <text evidence="1">Binds 1 zinc ion.</text>
</comment>
<comment type="subcellular location">
    <subcellularLocation>
        <location evidence="1">Cytoplasm</location>
    </subcellularLocation>
</comment>
<comment type="similarity">
    <text evidence="1">Belongs to the endoribonuclease YbeY family.</text>
</comment>
<evidence type="ECO:0000255" key="1">
    <source>
        <dbReference type="HAMAP-Rule" id="MF_00009"/>
    </source>
</evidence>
<reference key="1">
    <citation type="submission" date="2007-11" db="EMBL/GenBank/DDBJ databases">
        <authorList>
            <consortium name="The Salmonella enterica serovar Paratyphi B Genome Sequencing Project"/>
            <person name="McClelland M."/>
            <person name="Sanderson E.K."/>
            <person name="Porwollik S."/>
            <person name="Spieth J."/>
            <person name="Clifton W.S."/>
            <person name="Fulton R."/>
            <person name="Cordes M."/>
            <person name="Wollam A."/>
            <person name="Shah N."/>
            <person name="Pepin K."/>
            <person name="Bhonagiri V."/>
            <person name="Nash W."/>
            <person name="Johnson M."/>
            <person name="Thiruvilangam P."/>
            <person name="Wilson R."/>
        </authorList>
    </citation>
    <scope>NUCLEOTIDE SEQUENCE [LARGE SCALE GENOMIC DNA]</scope>
    <source>
        <strain>ATCC BAA-1250 / SPB7</strain>
    </source>
</reference>
<protein>
    <recommendedName>
        <fullName evidence="1">Endoribonuclease YbeY</fullName>
        <ecNumber evidence="1">3.1.-.-</ecNumber>
    </recommendedName>
</protein>
<feature type="chain" id="PRO_1000073917" description="Endoribonuclease YbeY">
    <location>
        <begin position="1"/>
        <end position="157"/>
    </location>
</feature>
<feature type="binding site" evidence="1">
    <location>
        <position position="114"/>
    </location>
    <ligand>
        <name>Zn(2+)</name>
        <dbReference type="ChEBI" id="CHEBI:29105"/>
        <note>catalytic</note>
    </ligand>
</feature>
<feature type="binding site" evidence="1">
    <location>
        <position position="118"/>
    </location>
    <ligand>
        <name>Zn(2+)</name>
        <dbReference type="ChEBI" id="CHEBI:29105"/>
        <note>catalytic</note>
    </ligand>
</feature>
<feature type="binding site" evidence="1">
    <location>
        <position position="124"/>
    </location>
    <ligand>
        <name>Zn(2+)</name>
        <dbReference type="ChEBI" id="CHEBI:29105"/>
        <note>catalytic</note>
    </ligand>
</feature>
<keyword id="KW-0963">Cytoplasm</keyword>
<keyword id="KW-0255">Endonuclease</keyword>
<keyword id="KW-0378">Hydrolase</keyword>
<keyword id="KW-0479">Metal-binding</keyword>
<keyword id="KW-0540">Nuclease</keyword>
<keyword id="KW-0690">Ribosome biogenesis</keyword>
<keyword id="KW-0698">rRNA processing</keyword>
<keyword id="KW-0862">Zinc</keyword>
<gene>
    <name evidence="1" type="primary">ybeY</name>
    <name type="ordered locus">SPAB_02880</name>
</gene>
<organism>
    <name type="scientific">Salmonella paratyphi B (strain ATCC BAA-1250 / SPB7)</name>
    <dbReference type="NCBI Taxonomy" id="1016998"/>
    <lineage>
        <taxon>Bacteria</taxon>
        <taxon>Pseudomonadati</taxon>
        <taxon>Pseudomonadota</taxon>
        <taxon>Gammaproteobacteria</taxon>
        <taxon>Enterobacterales</taxon>
        <taxon>Enterobacteriaceae</taxon>
        <taxon>Salmonella</taxon>
    </lineage>
</organism>
<sequence>MSQVILDLQLACENHAGLPDEAQFQRWLDGVIPQFQEEAEVTIRLVDEAESHDLNLTYRGKDKPTNVLSFPFEAPPGIEMPLLGDLIICRQVVEQEAQEQSKPLEAHWAHMVVHGSLHLLGYDHIDDDEAEEMESLETEIMLAMGYEDPYIAEKIAE</sequence>
<dbReference type="EC" id="3.1.-.-" evidence="1"/>
<dbReference type="EMBL" id="CP000886">
    <property type="protein sequence ID" value="ABX68245.1"/>
    <property type="molecule type" value="Genomic_DNA"/>
</dbReference>
<dbReference type="RefSeq" id="WP_000084477.1">
    <property type="nucleotide sequence ID" value="NC_010102.1"/>
</dbReference>
<dbReference type="SMR" id="A9MUI2"/>
<dbReference type="KEGG" id="spq:SPAB_02880"/>
<dbReference type="PATRIC" id="fig|1016998.12.peg.2714"/>
<dbReference type="HOGENOM" id="CLU_106710_0_1_6"/>
<dbReference type="BioCyc" id="SENT1016998:SPAB_RS11720-MONOMER"/>
<dbReference type="Proteomes" id="UP000008556">
    <property type="component" value="Chromosome"/>
</dbReference>
<dbReference type="GO" id="GO:0005737">
    <property type="term" value="C:cytoplasm"/>
    <property type="evidence" value="ECO:0007669"/>
    <property type="project" value="UniProtKB-SubCell"/>
</dbReference>
<dbReference type="GO" id="GO:0004222">
    <property type="term" value="F:metalloendopeptidase activity"/>
    <property type="evidence" value="ECO:0007669"/>
    <property type="project" value="InterPro"/>
</dbReference>
<dbReference type="GO" id="GO:0004521">
    <property type="term" value="F:RNA endonuclease activity"/>
    <property type="evidence" value="ECO:0007669"/>
    <property type="project" value="UniProtKB-UniRule"/>
</dbReference>
<dbReference type="GO" id="GO:0008270">
    <property type="term" value="F:zinc ion binding"/>
    <property type="evidence" value="ECO:0007669"/>
    <property type="project" value="UniProtKB-UniRule"/>
</dbReference>
<dbReference type="GO" id="GO:0006364">
    <property type="term" value="P:rRNA processing"/>
    <property type="evidence" value="ECO:0007669"/>
    <property type="project" value="UniProtKB-UniRule"/>
</dbReference>
<dbReference type="Gene3D" id="3.40.390.30">
    <property type="entry name" value="Metalloproteases ('zincins'), catalytic domain"/>
    <property type="match status" value="1"/>
</dbReference>
<dbReference type="HAMAP" id="MF_00009">
    <property type="entry name" value="Endoribonucl_YbeY"/>
    <property type="match status" value="1"/>
</dbReference>
<dbReference type="InterPro" id="IPR023091">
    <property type="entry name" value="MetalPrtase_cat_dom_sf_prd"/>
</dbReference>
<dbReference type="InterPro" id="IPR002036">
    <property type="entry name" value="YbeY"/>
</dbReference>
<dbReference type="InterPro" id="IPR020549">
    <property type="entry name" value="YbeY_CS"/>
</dbReference>
<dbReference type="NCBIfam" id="TIGR00043">
    <property type="entry name" value="rRNA maturation RNase YbeY"/>
    <property type="match status" value="1"/>
</dbReference>
<dbReference type="PANTHER" id="PTHR46986">
    <property type="entry name" value="ENDORIBONUCLEASE YBEY, CHLOROPLASTIC"/>
    <property type="match status" value="1"/>
</dbReference>
<dbReference type="PANTHER" id="PTHR46986:SF1">
    <property type="entry name" value="ENDORIBONUCLEASE YBEY, CHLOROPLASTIC"/>
    <property type="match status" value="1"/>
</dbReference>
<dbReference type="Pfam" id="PF02130">
    <property type="entry name" value="YbeY"/>
    <property type="match status" value="1"/>
</dbReference>
<dbReference type="SUPFAM" id="SSF55486">
    <property type="entry name" value="Metalloproteases ('zincins'), catalytic domain"/>
    <property type="match status" value="1"/>
</dbReference>
<dbReference type="PROSITE" id="PS01306">
    <property type="entry name" value="UPF0054"/>
    <property type="match status" value="1"/>
</dbReference>